<sequence length="548" mass="59951">MAEQQTTELTNIDLEAGSEWRFELEADENIALRTLSSDPVFINSQELTPSAWYPIYRHTKSALYAPTSARIQVTNLPASHYTSTSTVQPQLLNLHLAMERQRILSKRGMEQRGPRVMIMGPQSSGKTTVMKNLVNLALGTGMGWTPGAIGLDPSSPPNLIPGSLSISTPSHPIPTHHLAHPLGSPPASTAANTISGDVETASWWLGALEPTNKNAEVWRVLVEHMAEAWGMRCEKDKIANISGLFLDTPAAFTVPTLGTKKDDPKARYTLVSHAIQAFDIDTIIVIGHEKLHIDLSRLPLVQSRQLNVIRIPKSGGAVDLDDHDRETAHIFQVRTYFYGEPPLPPQISSLVGKMVSLDFELSPYSFQIPWSRLVVLRVGEENSAPSSALPLGSSKILSPLRLTRVDPSGPGHVVRLLNRVLALVDVKPEDRIVPAKESEVKEEVKEEKNEKDGEIKQDGEGEKKGEGKGEGEGEGEGKYGEEEGEAEGEDDEEEVPFREEIGTREVMGFIVITAIDTFARKYTVLSPTPGRLPTTVAIAGAIEWVDSA</sequence>
<comment type="function">
    <text evidence="1">Required for endonucleolytic cleavage during polyadenylation-dependent pre-mRNA 3'-end formation.</text>
</comment>
<comment type="subunit">
    <text evidence="1">Component of a pre-mRNA cleavage factor complex. Interacts directly with PCF11.</text>
</comment>
<comment type="subcellular location">
    <subcellularLocation>
        <location evidence="1">Nucleus</location>
    </subcellularLocation>
</comment>
<comment type="similarity">
    <text evidence="1">Belongs to the Clp1 family. Clp1 subfamily.</text>
</comment>
<comment type="caution">
    <text evidence="3">May lack the polyribonucleotide 5'-hydroxyl-kinase and polynucleotide 5'-hydroxyl-kinase activities that are characteristic of the human ortholog.</text>
</comment>
<gene>
    <name evidence="1" type="primary">CLP1</name>
    <name type="ordered locus">CNBE4250</name>
</gene>
<proteinExistence type="inferred from homology"/>
<name>CLP1_CRYNB</name>
<dbReference type="EMBL" id="AAEY01000028">
    <property type="protein sequence ID" value="EAL20505.1"/>
    <property type="molecule type" value="Genomic_DNA"/>
</dbReference>
<dbReference type="RefSeq" id="XP_775152.1">
    <property type="nucleotide sequence ID" value="XM_770059.1"/>
</dbReference>
<dbReference type="SMR" id="P0CM77"/>
<dbReference type="GeneID" id="4936436"/>
<dbReference type="KEGG" id="cnb:CNBE4250"/>
<dbReference type="VEuPathDB" id="FungiDB:CNBE4250"/>
<dbReference type="HOGENOM" id="CLU_018195_3_1_1"/>
<dbReference type="OrthoDB" id="3976at5206"/>
<dbReference type="GO" id="GO:0005849">
    <property type="term" value="C:mRNA cleavage factor complex"/>
    <property type="evidence" value="ECO:0007669"/>
    <property type="project" value="UniProtKB-UniRule"/>
</dbReference>
<dbReference type="GO" id="GO:0005524">
    <property type="term" value="F:ATP binding"/>
    <property type="evidence" value="ECO:0007669"/>
    <property type="project" value="UniProtKB-UniRule"/>
</dbReference>
<dbReference type="GO" id="GO:0016887">
    <property type="term" value="F:ATP hydrolysis activity"/>
    <property type="evidence" value="ECO:0007669"/>
    <property type="project" value="InterPro"/>
</dbReference>
<dbReference type="GO" id="GO:0051731">
    <property type="term" value="F:polynucleotide 5'-hydroxyl-kinase activity"/>
    <property type="evidence" value="ECO:0007669"/>
    <property type="project" value="InterPro"/>
</dbReference>
<dbReference type="GO" id="GO:0031124">
    <property type="term" value="P:mRNA 3'-end processing"/>
    <property type="evidence" value="ECO:0007669"/>
    <property type="project" value="UniProtKB-UniRule"/>
</dbReference>
<dbReference type="GO" id="GO:0006388">
    <property type="term" value="P:tRNA splicing, via endonucleolytic cleavage and ligation"/>
    <property type="evidence" value="ECO:0007669"/>
    <property type="project" value="TreeGrafter"/>
</dbReference>
<dbReference type="Gene3D" id="2.60.120.1030">
    <property type="entry name" value="Clp1, DNA binding domain"/>
    <property type="match status" value="1"/>
</dbReference>
<dbReference type="Gene3D" id="3.40.50.300">
    <property type="entry name" value="P-loop containing nucleotide triphosphate hydrolases"/>
    <property type="match status" value="1"/>
</dbReference>
<dbReference type="Gene3D" id="2.40.30.330">
    <property type="entry name" value="Pre-mRNA cleavage complex subunit Clp1, C-terminal domain"/>
    <property type="match status" value="1"/>
</dbReference>
<dbReference type="HAMAP" id="MF_03035">
    <property type="entry name" value="Clp1"/>
    <property type="match status" value="1"/>
</dbReference>
<dbReference type="InterPro" id="IPR003593">
    <property type="entry name" value="AAA+_ATPase"/>
</dbReference>
<dbReference type="InterPro" id="IPR028606">
    <property type="entry name" value="Clp1"/>
</dbReference>
<dbReference type="InterPro" id="IPR045116">
    <property type="entry name" value="Clp1/Grc3"/>
</dbReference>
<dbReference type="InterPro" id="IPR010655">
    <property type="entry name" value="Clp1_C"/>
</dbReference>
<dbReference type="InterPro" id="IPR038238">
    <property type="entry name" value="Clp1_C_sf"/>
</dbReference>
<dbReference type="InterPro" id="IPR032324">
    <property type="entry name" value="Clp1_N"/>
</dbReference>
<dbReference type="InterPro" id="IPR038239">
    <property type="entry name" value="Clp1_N_sf"/>
</dbReference>
<dbReference type="InterPro" id="IPR032319">
    <property type="entry name" value="CLP1_P"/>
</dbReference>
<dbReference type="InterPro" id="IPR027417">
    <property type="entry name" value="P-loop_NTPase"/>
</dbReference>
<dbReference type="PANTHER" id="PTHR12755">
    <property type="entry name" value="CLEAVAGE/POLYADENYLATION FACTOR IA SUBUNIT CLP1P"/>
    <property type="match status" value="1"/>
</dbReference>
<dbReference type="PANTHER" id="PTHR12755:SF6">
    <property type="entry name" value="POLYRIBONUCLEOTIDE 5'-HYDROXYL-KINASE CLP1"/>
    <property type="match status" value="1"/>
</dbReference>
<dbReference type="Pfam" id="PF06807">
    <property type="entry name" value="Clp1"/>
    <property type="match status" value="2"/>
</dbReference>
<dbReference type="Pfam" id="PF16573">
    <property type="entry name" value="CLP1_N"/>
    <property type="match status" value="1"/>
</dbReference>
<dbReference type="Pfam" id="PF16575">
    <property type="entry name" value="CLP1_P"/>
    <property type="match status" value="1"/>
</dbReference>
<dbReference type="SMART" id="SM00382">
    <property type="entry name" value="AAA"/>
    <property type="match status" value="1"/>
</dbReference>
<dbReference type="SUPFAM" id="SSF52540">
    <property type="entry name" value="P-loop containing nucleoside triphosphate hydrolases"/>
    <property type="match status" value="1"/>
</dbReference>
<feature type="chain" id="PRO_0000410041" description="mRNA cleavage and polyadenylation factor CLP1">
    <location>
        <begin position="1"/>
        <end position="548"/>
    </location>
</feature>
<feature type="region of interest" description="Disordered" evidence="2">
    <location>
        <begin position="437"/>
        <end position="500"/>
    </location>
</feature>
<feature type="compositionally biased region" description="Basic and acidic residues" evidence="2">
    <location>
        <begin position="437"/>
        <end position="481"/>
    </location>
</feature>
<feature type="compositionally biased region" description="Acidic residues" evidence="2">
    <location>
        <begin position="482"/>
        <end position="494"/>
    </location>
</feature>
<feature type="binding site" evidence="1">
    <location>
        <position position="19"/>
    </location>
    <ligand>
        <name>ATP</name>
        <dbReference type="ChEBI" id="CHEBI:30616"/>
    </ligand>
</feature>
<feature type="binding site" evidence="1">
    <location>
        <position position="60"/>
    </location>
    <ligand>
        <name>ATP</name>
        <dbReference type="ChEBI" id="CHEBI:30616"/>
    </ligand>
</feature>
<feature type="binding site" evidence="1">
    <location>
        <begin position="123"/>
        <end position="128"/>
    </location>
    <ligand>
        <name>ATP</name>
        <dbReference type="ChEBI" id="CHEBI:30616"/>
    </ligand>
</feature>
<protein>
    <recommendedName>
        <fullName evidence="1">mRNA cleavage and polyadenylation factor CLP1</fullName>
    </recommendedName>
</protein>
<evidence type="ECO:0000255" key="1">
    <source>
        <dbReference type="HAMAP-Rule" id="MF_03035"/>
    </source>
</evidence>
<evidence type="ECO:0000256" key="2">
    <source>
        <dbReference type="SAM" id="MobiDB-lite"/>
    </source>
</evidence>
<evidence type="ECO:0000305" key="3"/>
<reference key="1">
    <citation type="journal article" date="2005" name="Science">
        <title>The genome of the basidiomycetous yeast and human pathogen Cryptococcus neoformans.</title>
        <authorList>
            <person name="Loftus B.J."/>
            <person name="Fung E."/>
            <person name="Roncaglia P."/>
            <person name="Rowley D."/>
            <person name="Amedeo P."/>
            <person name="Bruno D."/>
            <person name="Vamathevan J."/>
            <person name="Miranda M."/>
            <person name="Anderson I.J."/>
            <person name="Fraser J.A."/>
            <person name="Allen J.E."/>
            <person name="Bosdet I.E."/>
            <person name="Brent M.R."/>
            <person name="Chiu R."/>
            <person name="Doering T.L."/>
            <person name="Donlin M.J."/>
            <person name="D'Souza C.A."/>
            <person name="Fox D.S."/>
            <person name="Grinberg V."/>
            <person name="Fu J."/>
            <person name="Fukushima M."/>
            <person name="Haas B.J."/>
            <person name="Huang J.C."/>
            <person name="Janbon G."/>
            <person name="Jones S.J.M."/>
            <person name="Koo H.L."/>
            <person name="Krzywinski M.I."/>
            <person name="Kwon-Chung K.J."/>
            <person name="Lengeler K.B."/>
            <person name="Maiti R."/>
            <person name="Marra M.A."/>
            <person name="Marra R.E."/>
            <person name="Mathewson C.A."/>
            <person name="Mitchell T.G."/>
            <person name="Pertea M."/>
            <person name="Riggs F.R."/>
            <person name="Salzberg S.L."/>
            <person name="Schein J.E."/>
            <person name="Shvartsbeyn A."/>
            <person name="Shin H."/>
            <person name="Shumway M."/>
            <person name="Specht C.A."/>
            <person name="Suh B.B."/>
            <person name="Tenney A."/>
            <person name="Utterback T.R."/>
            <person name="Wickes B.L."/>
            <person name="Wortman J.R."/>
            <person name="Wye N.H."/>
            <person name="Kronstad J.W."/>
            <person name="Lodge J.K."/>
            <person name="Heitman J."/>
            <person name="Davis R.W."/>
            <person name="Fraser C.M."/>
            <person name="Hyman R.W."/>
        </authorList>
    </citation>
    <scope>NUCLEOTIDE SEQUENCE [LARGE SCALE GENOMIC DNA]</scope>
    <source>
        <strain>B-3501A</strain>
    </source>
</reference>
<accession>P0CM77</accession>
<accession>Q55RV6</accession>
<accession>Q5KGA9</accession>
<organism>
    <name type="scientific">Cryptococcus neoformans var. neoformans serotype D (strain B-3501A)</name>
    <name type="common">Filobasidiella neoformans</name>
    <dbReference type="NCBI Taxonomy" id="283643"/>
    <lineage>
        <taxon>Eukaryota</taxon>
        <taxon>Fungi</taxon>
        <taxon>Dikarya</taxon>
        <taxon>Basidiomycota</taxon>
        <taxon>Agaricomycotina</taxon>
        <taxon>Tremellomycetes</taxon>
        <taxon>Tremellales</taxon>
        <taxon>Cryptococcaceae</taxon>
        <taxon>Cryptococcus</taxon>
        <taxon>Cryptococcus neoformans species complex</taxon>
    </lineage>
</organism>
<keyword id="KW-0067">ATP-binding</keyword>
<keyword id="KW-0507">mRNA processing</keyword>
<keyword id="KW-0547">Nucleotide-binding</keyword>
<keyword id="KW-0539">Nucleus</keyword>